<gene>
    <name evidence="1" type="primary">aroQ</name>
    <name type="ordered locus">Daud_1003</name>
</gene>
<keyword id="KW-0028">Amino-acid biosynthesis</keyword>
<keyword id="KW-0057">Aromatic amino acid biosynthesis</keyword>
<keyword id="KW-0456">Lyase</keyword>
<keyword id="KW-1185">Reference proteome</keyword>
<name>AROQ_DESAP</name>
<comment type="function">
    <text evidence="1">Catalyzes a trans-dehydration via an enolate intermediate.</text>
</comment>
<comment type="catalytic activity">
    <reaction evidence="1">
        <text>3-dehydroquinate = 3-dehydroshikimate + H2O</text>
        <dbReference type="Rhea" id="RHEA:21096"/>
        <dbReference type="ChEBI" id="CHEBI:15377"/>
        <dbReference type="ChEBI" id="CHEBI:16630"/>
        <dbReference type="ChEBI" id="CHEBI:32364"/>
        <dbReference type="EC" id="4.2.1.10"/>
    </reaction>
</comment>
<comment type="pathway">
    <text evidence="1">Metabolic intermediate biosynthesis; chorismate biosynthesis; chorismate from D-erythrose 4-phosphate and phosphoenolpyruvate: step 3/7.</text>
</comment>
<comment type="subunit">
    <text evidence="1">Homododecamer.</text>
</comment>
<comment type="similarity">
    <text evidence="1">Belongs to the type-II 3-dehydroquinase family.</text>
</comment>
<evidence type="ECO:0000255" key="1">
    <source>
        <dbReference type="HAMAP-Rule" id="MF_00169"/>
    </source>
</evidence>
<accession>B1I3B8</accession>
<proteinExistence type="inferred from homology"/>
<dbReference type="EC" id="4.2.1.10" evidence="1"/>
<dbReference type="EMBL" id="CP000860">
    <property type="protein sequence ID" value="ACA59515.1"/>
    <property type="molecule type" value="Genomic_DNA"/>
</dbReference>
<dbReference type="RefSeq" id="WP_012302101.1">
    <property type="nucleotide sequence ID" value="NC_010424.1"/>
</dbReference>
<dbReference type="SMR" id="B1I3B8"/>
<dbReference type="STRING" id="477974.Daud_1003"/>
<dbReference type="KEGG" id="dau:Daud_1003"/>
<dbReference type="eggNOG" id="COG0757">
    <property type="taxonomic scope" value="Bacteria"/>
</dbReference>
<dbReference type="HOGENOM" id="CLU_090968_1_0_9"/>
<dbReference type="OrthoDB" id="9790793at2"/>
<dbReference type="UniPathway" id="UPA00053">
    <property type="reaction ID" value="UER00086"/>
</dbReference>
<dbReference type="Proteomes" id="UP000008544">
    <property type="component" value="Chromosome"/>
</dbReference>
<dbReference type="GO" id="GO:0003855">
    <property type="term" value="F:3-dehydroquinate dehydratase activity"/>
    <property type="evidence" value="ECO:0007669"/>
    <property type="project" value="UniProtKB-UniRule"/>
</dbReference>
<dbReference type="GO" id="GO:0008652">
    <property type="term" value="P:amino acid biosynthetic process"/>
    <property type="evidence" value="ECO:0007669"/>
    <property type="project" value="UniProtKB-KW"/>
</dbReference>
<dbReference type="GO" id="GO:0009073">
    <property type="term" value="P:aromatic amino acid family biosynthetic process"/>
    <property type="evidence" value="ECO:0007669"/>
    <property type="project" value="UniProtKB-KW"/>
</dbReference>
<dbReference type="GO" id="GO:0009423">
    <property type="term" value="P:chorismate biosynthetic process"/>
    <property type="evidence" value="ECO:0007669"/>
    <property type="project" value="UniProtKB-UniRule"/>
</dbReference>
<dbReference type="GO" id="GO:0019631">
    <property type="term" value="P:quinate catabolic process"/>
    <property type="evidence" value="ECO:0007669"/>
    <property type="project" value="TreeGrafter"/>
</dbReference>
<dbReference type="CDD" id="cd00466">
    <property type="entry name" value="DHQase_II"/>
    <property type="match status" value="1"/>
</dbReference>
<dbReference type="Gene3D" id="3.40.50.9100">
    <property type="entry name" value="Dehydroquinase, class II"/>
    <property type="match status" value="1"/>
</dbReference>
<dbReference type="HAMAP" id="MF_00169">
    <property type="entry name" value="AroQ"/>
    <property type="match status" value="1"/>
</dbReference>
<dbReference type="InterPro" id="IPR001874">
    <property type="entry name" value="DHquinase_II"/>
</dbReference>
<dbReference type="InterPro" id="IPR018509">
    <property type="entry name" value="DHquinase_II_CS"/>
</dbReference>
<dbReference type="InterPro" id="IPR036441">
    <property type="entry name" value="DHquinase_II_sf"/>
</dbReference>
<dbReference type="NCBIfam" id="TIGR01088">
    <property type="entry name" value="aroQ"/>
    <property type="match status" value="1"/>
</dbReference>
<dbReference type="NCBIfam" id="NF003805">
    <property type="entry name" value="PRK05395.1-2"/>
    <property type="match status" value="1"/>
</dbReference>
<dbReference type="NCBIfam" id="NF003806">
    <property type="entry name" value="PRK05395.1-3"/>
    <property type="match status" value="1"/>
</dbReference>
<dbReference type="NCBIfam" id="NF003807">
    <property type="entry name" value="PRK05395.1-4"/>
    <property type="match status" value="1"/>
</dbReference>
<dbReference type="PANTHER" id="PTHR21272">
    <property type="entry name" value="CATABOLIC 3-DEHYDROQUINASE"/>
    <property type="match status" value="1"/>
</dbReference>
<dbReference type="PANTHER" id="PTHR21272:SF3">
    <property type="entry name" value="CATABOLIC 3-DEHYDROQUINASE"/>
    <property type="match status" value="1"/>
</dbReference>
<dbReference type="Pfam" id="PF01220">
    <property type="entry name" value="DHquinase_II"/>
    <property type="match status" value="1"/>
</dbReference>
<dbReference type="PIRSF" id="PIRSF001399">
    <property type="entry name" value="DHquinase_II"/>
    <property type="match status" value="1"/>
</dbReference>
<dbReference type="SUPFAM" id="SSF52304">
    <property type="entry name" value="Type II 3-dehydroquinate dehydratase"/>
    <property type="match status" value="1"/>
</dbReference>
<dbReference type="PROSITE" id="PS01029">
    <property type="entry name" value="DEHYDROQUINASE_II"/>
    <property type="match status" value="1"/>
</dbReference>
<feature type="chain" id="PRO_1000097597" description="3-dehydroquinate dehydratase">
    <location>
        <begin position="1"/>
        <end position="150"/>
    </location>
</feature>
<feature type="active site" description="Proton acceptor" evidence="1">
    <location>
        <position position="22"/>
    </location>
</feature>
<feature type="active site" description="Proton donor" evidence="1">
    <location>
        <position position="99"/>
    </location>
</feature>
<feature type="binding site" evidence="1">
    <location>
        <position position="73"/>
    </location>
    <ligand>
        <name>substrate</name>
    </ligand>
</feature>
<feature type="binding site" evidence="1">
    <location>
        <position position="79"/>
    </location>
    <ligand>
        <name>substrate</name>
    </ligand>
</feature>
<feature type="binding site" evidence="1">
    <location>
        <position position="86"/>
    </location>
    <ligand>
        <name>substrate</name>
    </ligand>
</feature>
<feature type="binding site" evidence="1">
    <location>
        <begin position="100"/>
        <end position="101"/>
    </location>
    <ligand>
        <name>substrate</name>
    </ligand>
</feature>
<feature type="binding site" evidence="1">
    <location>
        <position position="110"/>
    </location>
    <ligand>
        <name>substrate</name>
    </ligand>
</feature>
<feature type="site" description="Transition state stabilizer" evidence="1">
    <location>
        <position position="17"/>
    </location>
</feature>
<sequence>MRVLVLHGPNLNLLGRRETGIYGNETLADIDARLQELASELGVDLECFQSNSEAALIERLHGAPGTVDAVVFNPAGFTHYSIALRDAVAAVGLPVVEVHLTNIHAREEFRHRSVIAPVAAGQISGFGTAGYLLGLRAAVELVSRGKMSRA</sequence>
<protein>
    <recommendedName>
        <fullName evidence="1">3-dehydroquinate dehydratase</fullName>
        <shortName evidence="1">3-dehydroquinase</shortName>
        <ecNumber evidence="1">4.2.1.10</ecNumber>
    </recommendedName>
    <alternativeName>
        <fullName evidence="1">Type II DHQase</fullName>
    </alternativeName>
</protein>
<organism>
    <name type="scientific">Desulforudis audaxviator (strain MP104C)</name>
    <dbReference type="NCBI Taxonomy" id="477974"/>
    <lineage>
        <taxon>Bacteria</taxon>
        <taxon>Bacillati</taxon>
        <taxon>Bacillota</taxon>
        <taxon>Clostridia</taxon>
        <taxon>Thermoanaerobacterales</taxon>
        <taxon>Candidatus Desulforudaceae</taxon>
        <taxon>Candidatus Desulforudis</taxon>
    </lineage>
</organism>
<reference key="1">
    <citation type="submission" date="2007-10" db="EMBL/GenBank/DDBJ databases">
        <title>Complete sequence of chromosome of Desulforudis audaxviator MP104C.</title>
        <authorList>
            <person name="Copeland A."/>
            <person name="Lucas S."/>
            <person name="Lapidus A."/>
            <person name="Barry K."/>
            <person name="Glavina del Rio T."/>
            <person name="Dalin E."/>
            <person name="Tice H."/>
            <person name="Bruce D."/>
            <person name="Pitluck S."/>
            <person name="Lowry S.R."/>
            <person name="Larimer F."/>
            <person name="Land M.L."/>
            <person name="Hauser L."/>
            <person name="Kyrpides N."/>
            <person name="Ivanova N.N."/>
            <person name="Richardson P."/>
        </authorList>
    </citation>
    <scope>NUCLEOTIDE SEQUENCE [LARGE SCALE GENOMIC DNA]</scope>
    <source>
        <strain>MP104C</strain>
    </source>
</reference>